<comment type="function">
    <text evidence="1">One of the primary rRNA binding proteins, it binds directly to 16S rRNA central domain where it helps coordinate assembly of the platform of the 30S subunit.</text>
</comment>
<comment type="subunit">
    <text evidence="1">Part of the 30S ribosomal subunit. Contacts proteins S5 and S12.</text>
</comment>
<comment type="similarity">
    <text evidence="1">Belongs to the universal ribosomal protein uS8 family.</text>
</comment>
<reference key="1">
    <citation type="submission" date="2007-09" db="EMBL/GenBank/DDBJ databases">
        <title>Complete genome sequence of Rickettsia rickettsii.</title>
        <authorList>
            <person name="Madan A."/>
            <person name="Fahey J."/>
            <person name="Helton E."/>
            <person name="Ketteman M."/>
            <person name="Madan A."/>
            <person name="Rodrigues S."/>
            <person name="Sanchez A."/>
            <person name="Dasch G."/>
            <person name="Eremeeva M."/>
        </authorList>
    </citation>
    <scope>NUCLEOTIDE SEQUENCE [LARGE SCALE GENOMIC DNA]</scope>
    <source>
        <strain>Sheila Smith</strain>
    </source>
</reference>
<protein>
    <recommendedName>
        <fullName evidence="1">Small ribosomal subunit protein uS8</fullName>
    </recommendedName>
    <alternativeName>
        <fullName evidence="2">30S ribosomal protein S8</fullName>
    </alternativeName>
</protein>
<gene>
    <name evidence="1" type="primary">rpsH</name>
    <name type="ordered locus">A1G_05485</name>
</gene>
<evidence type="ECO:0000255" key="1">
    <source>
        <dbReference type="HAMAP-Rule" id="MF_01302"/>
    </source>
</evidence>
<evidence type="ECO:0000305" key="2"/>
<dbReference type="EMBL" id="CP000848">
    <property type="protein sequence ID" value="ABV76580.1"/>
    <property type="molecule type" value="Genomic_DNA"/>
</dbReference>
<dbReference type="RefSeq" id="WP_012151143.1">
    <property type="nucleotide sequence ID" value="NC_009882.1"/>
</dbReference>
<dbReference type="SMR" id="A8GT55"/>
<dbReference type="GeneID" id="79937656"/>
<dbReference type="KEGG" id="rri:A1G_05485"/>
<dbReference type="HOGENOM" id="CLU_098428_0_0_5"/>
<dbReference type="Proteomes" id="UP000006832">
    <property type="component" value="Chromosome"/>
</dbReference>
<dbReference type="GO" id="GO:1990904">
    <property type="term" value="C:ribonucleoprotein complex"/>
    <property type="evidence" value="ECO:0007669"/>
    <property type="project" value="UniProtKB-KW"/>
</dbReference>
<dbReference type="GO" id="GO:0005840">
    <property type="term" value="C:ribosome"/>
    <property type="evidence" value="ECO:0007669"/>
    <property type="project" value="UniProtKB-KW"/>
</dbReference>
<dbReference type="GO" id="GO:0019843">
    <property type="term" value="F:rRNA binding"/>
    <property type="evidence" value="ECO:0007669"/>
    <property type="project" value="UniProtKB-UniRule"/>
</dbReference>
<dbReference type="GO" id="GO:0003735">
    <property type="term" value="F:structural constituent of ribosome"/>
    <property type="evidence" value="ECO:0007669"/>
    <property type="project" value="InterPro"/>
</dbReference>
<dbReference type="GO" id="GO:0006412">
    <property type="term" value="P:translation"/>
    <property type="evidence" value="ECO:0007669"/>
    <property type="project" value="UniProtKB-UniRule"/>
</dbReference>
<dbReference type="FunFam" id="3.30.1370.30:FF:000002">
    <property type="entry name" value="30S ribosomal protein S8"/>
    <property type="match status" value="1"/>
</dbReference>
<dbReference type="FunFam" id="3.30.1490.10:FF:000001">
    <property type="entry name" value="30S ribosomal protein S8"/>
    <property type="match status" value="1"/>
</dbReference>
<dbReference type="Gene3D" id="3.30.1370.30">
    <property type="match status" value="1"/>
</dbReference>
<dbReference type="Gene3D" id="3.30.1490.10">
    <property type="match status" value="1"/>
</dbReference>
<dbReference type="HAMAP" id="MF_01302_B">
    <property type="entry name" value="Ribosomal_uS8_B"/>
    <property type="match status" value="1"/>
</dbReference>
<dbReference type="InterPro" id="IPR000630">
    <property type="entry name" value="Ribosomal_uS8"/>
</dbReference>
<dbReference type="InterPro" id="IPR047863">
    <property type="entry name" value="Ribosomal_uS8_CS"/>
</dbReference>
<dbReference type="InterPro" id="IPR035987">
    <property type="entry name" value="Ribosomal_uS8_sf"/>
</dbReference>
<dbReference type="NCBIfam" id="NF001109">
    <property type="entry name" value="PRK00136.1"/>
    <property type="match status" value="1"/>
</dbReference>
<dbReference type="PANTHER" id="PTHR11758">
    <property type="entry name" value="40S RIBOSOMAL PROTEIN S15A"/>
    <property type="match status" value="1"/>
</dbReference>
<dbReference type="Pfam" id="PF00410">
    <property type="entry name" value="Ribosomal_S8"/>
    <property type="match status" value="1"/>
</dbReference>
<dbReference type="SUPFAM" id="SSF56047">
    <property type="entry name" value="Ribosomal protein S8"/>
    <property type="match status" value="1"/>
</dbReference>
<dbReference type="PROSITE" id="PS00053">
    <property type="entry name" value="RIBOSOMAL_S8"/>
    <property type="match status" value="1"/>
</dbReference>
<name>RS8_RICRS</name>
<organism>
    <name type="scientific">Rickettsia rickettsii (strain Sheila Smith)</name>
    <dbReference type="NCBI Taxonomy" id="392021"/>
    <lineage>
        <taxon>Bacteria</taxon>
        <taxon>Pseudomonadati</taxon>
        <taxon>Pseudomonadota</taxon>
        <taxon>Alphaproteobacteria</taxon>
        <taxon>Rickettsiales</taxon>
        <taxon>Rickettsiaceae</taxon>
        <taxon>Rickettsieae</taxon>
        <taxon>Rickettsia</taxon>
        <taxon>spotted fever group</taxon>
    </lineage>
</organism>
<accession>A8GT55</accession>
<feature type="chain" id="PRO_1000051796" description="Small ribosomal subunit protein uS8">
    <location>
        <begin position="1"/>
        <end position="132"/>
    </location>
</feature>
<sequence>MSMTDNVADMLTRIRNAYKSKLISVSFPSSKIKTSILDVLQKEGYIKDYITTQKNNISYTEVALKYSVNGDASICEIHRVSKPGKRVYSAIKDLKGYYNNMGIYILSTPYGVMSDREAHIKNVGGEVICKVF</sequence>
<proteinExistence type="inferred from homology"/>
<keyword id="KW-0687">Ribonucleoprotein</keyword>
<keyword id="KW-0689">Ribosomal protein</keyword>
<keyword id="KW-0694">RNA-binding</keyword>
<keyword id="KW-0699">rRNA-binding</keyword>